<keyword id="KW-0001">2Fe-2S</keyword>
<keyword id="KW-0004">4Fe-4S</keyword>
<keyword id="KW-0093">Biotin biosynthesis</keyword>
<keyword id="KW-0408">Iron</keyword>
<keyword id="KW-0411">Iron-sulfur</keyword>
<keyword id="KW-0479">Metal-binding</keyword>
<keyword id="KW-0949">S-adenosyl-L-methionine</keyword>
<keyword id="KW-0808">Transferase</keyword>
<evidence type="ECO:0000255" key="1">
    <source>
        <dbReference type="HAMAP-Rule" id="MF_01694"/>
    </source>
</evidence>
<evidence type="ECO:0000255" key="2">
    <source>
        <dbReference type="PROSITE-ProRule" id="PRU01266"/>
    </source>
</evidence>
<feature type="chain" id="PRO_0000381434" description="Biotin synthase">
    <location>
        <begin position="1"/>
        <end position="346"/>
    </location>
</feature>
<feature type="domain" description="Radical SAM core" evidence="2">
    <location>
        <begin position="38"/>
        <end position="256"/>
    </location>
</feature>
<feature type="binding site" evidence="1">
    <location>
        <position position="53"/>
    </location>
    <ligand>
        <name>[4Fe-4S] cluster</name>
        <dbReference type="ChEBI" id="CHEBI:49883"/>
        <note>4Fe-4S-S-AdoMet</note>
    </ligand>
</feature>
<feature type="binding site" evidence="1">
    <location>
        <position position="57"/>
    </location>
    <ligand>
        <name>[4Fe-4S] cluster</name>
        <dbReference type="ChEBI" id="CHEBI:49883"/>
        <note>4Fe-4S-S-AdoMet</note>
    </ligand>
</feature>
<feature type="binding site" evidence="1">
    <location>
        <position position="60"/>
    </location>
    <ligand>
        <name>[4Fe-4S] cluster</name>
        <dbReference type="ChEBI" id="CHEBI:49883"/>
        <note>4Fe-4S-S-AdoMet</note>
    </ligand>
</feature>
<feature type="binding site" evidence="1">
    <location>
        <position position="97"/>
    </location>
    <ligand>
        <name>[2Fe-2S] cluster</name>
        <dbReference type="ChEBI" id="CHEBI:190135"/>
    </ligand>
</feature>
<feature type="binding site" evidence="1">
    <location>
        <position position="128"/>
    </location>
    <ligand>
        <name>[2Fe-2S] cluster</name>
        <dbReference type="ChEBI" id="CHEBI:190135"/>
    </ligand>
</feature>
<feature type="binding site" evidence="1">
    <location>
        <position position="188"/>
    </location>
    <ligand>
        <name>[2Fe-2S] cluster</name>
        <dbReference type="ChEBI" id="CHEBI:190135"/>
    </ligand>
</feature>
<feature type="binding site" evidence="1">
    <location>
        <position position="260"/>
    </location>
    <ligand>
        <name>[2Fe-2S] cluster</name>
        <dbReference type="ChEBI" id="CHEBI:190135"/>
    </ligand>
</feature>
<comment type="function">
    <text evidence="1">Catalyzes the conversion of dethiobiotin (DTB) to biotin by the insertion of a sulfur atom into dethiobiotin via a radical-based mechanism.</text>
</comment>
<comment type="catalytic activity">
    <reaction evidence="1">
        <text>(4R,5S)-dethiobiotin + (sulfur carrier)-SH + 2 reduced [2Fe-2S]-[ferredoxin] + 2 S-adenosyl-L-methionine = (sulfur carrier)-H + biotin + 2 5'-deoxyadenosine + 2 L-methionine + 2 oxidized [2Fe-2S]-[ferredoxin]</text>
        <dbReference type="Rhea" id="RHEA:22060"/>
        <dbReference type="Rhea" id="RHEA-COMP:10000"/>
        <dbReference type="Rhea" id="RHEA-COMP:10001"/>
        <dbReference type="Rhea" id="RHEA-COMP:14737"/>
        <dbReference type="Rhea" id="RHEA-COMP:14739"/>
        <dbReference type="ChEBI" id="CHEBI:17319"/>
        <dbReference type="ChEBI" id="CHEBI:29917"/>
        <dbReference type="ChEBI" id="CHEBI:33737"/>
        <dbReference type="ChEBI" id="CHEBI:33738"/>
        <dbReference type="ChEBI" id="CHEBI:57586"/>
        <dbReference type="ChEBI" id="CHEBI:57844"/>
        <dbReference type="ChEBI" id="CHEBI:59789"/>
        <dbReference type="ChEBI" id="CHEBI:64428"/>
        <dbReference type="ChEBI" id="CHEBI:149473"/>
        <dbReference type="EC" id="2.8.1.6"/>
    </reaction>
</comment>
<comment type="cofactor">
    <cofactor evidence="1">
        <name>[4Fe-4S] cluster</name>
        <dbReference type="ChEBI" id="CHEBI:49883"/>
    </cofactor>
    <text evidence="1">Binds 1 [4Fe-4S] cluster. The cluster is coordinated with 3 cysteines and an exchangeable S-adenosyl-L-methionine.</text>
</comment>
<comment type="cofactor">
    <cofactor evidence="1">
        <name>[2Fe-2S] cluster</name>
        <dbReference type="ChEBI" id="CHEBI:190135"/>
    </cofactor>
    <text evidence="1">Binds 1 [2Fe-2S] cluster. The cluster is coordinated with 3 cysteines and 1 arginine.</text>
</comment>
<comment type="pathway">
    <text evidence="1">Cofactor biosynthesis; biotin biosynthesis; biotin from 7,8-diaminononanoate: step 2/2.</text>
</comment>
<comment type="subunit">
    <text evidence="1">Homodimer.</text>
</comment>
<comment type="similarity">
    <text evidence="1">Belongs to the radical SAM superfamily. Biotin synthase family.</text>
</comment>
<organism>
    <name type="scientific">Klebsiella pneumoniae (strain 342)</name>
    <dbReference type="NCBI Taxonomy" id="507522"/>
    <lineage>
        <taxon>Bacteria</taxon>
        <taxon>Pseudomonadati</taxon>
        <taxon>Pseudomonadota</taxon>
        <taxon>Gammaproteobacteria</taxon>
        <taxon>Enterobacterales</taxon>
        <taxon>Enterobacteriaceae</taxon>
        <taxon>Klebsiella/Raoultella group</taxon>
        <taxon>Klebsiella</taxon>
        <taxon>Klebsiella pneumoniae complex</taxon>
    </lineage>
</organism>
<sequence>MAHRARWTMSQVTELFNKPLIDLLFEAQQIHRQHFDPRQVQVSTLLSIKTGACPEDCKYCPQSARYKTGLETERLMEVEQVLESARQAKNAGSTRFCMGAAWKNPNDRDMPYLEQMVKGVKALGLESCMTLGTLTDSQAQRLAGAGLDYYNHNLDTSPEFYGNIITTRTYQERLDTLDKVRDAGIKVCSGGIVGLGETVKDRAGLLLQLANLPTPPESVPINMLVKVKGTPLADNDDVDAFDFIRTIAIARIMMPTSYVRLSAGREQMNEQTQAMCFMAGANSIFYGCKLLTTPNPEEDKDLQLFRKLGINPQQTAVLEGDNEQQQRLEQALLTPDTEEYYNAAAL</sequence>
<reference key="1">
    <citation type="journal article" date="2008" name="PLoS Genet.">
        <title>Complete genome sequence of the N2-fixing broad host range endophyte Klebsiella pneumoniae 342 and virulence predictions verified in mice.</title>
        <authorList>
            <person name="Fouts D.E."/>
            <person name="Tyler H.L."/>
            <person name="DeBoy R.T."/>
            <person name="Daugherty S."/>
            <person name="Ren Q."/>
            <person name="Badger J.H."/>
            <person name="Durkin A.S."/>
            <person name="Huot H."/>
            <person name="Shrivastava S."/>
            <person name="Kothari S."/>
            <person name="Dodson R.J."/>
            <person name="Mohamoud Y."/>
            <person name="Khouri H."/>
            <person name="Roesch L.F.W."/>
            <person name="Krogfelt K.A."/>
            <person name="Struve C."/>
            <person name="Triplett E.W."/>
            <person name="Methe B.A."/>
        </authorList>
    </citation>
    <scope>NUCLEOTIDE SEQUENCE [LARGE SCALE GENOMIC DNA]</scope>
    <source>
        <strain>342</strain>
    </source>
</reference>
<proteinExistence type="inferred from homology"/>
<dbReference type="EC" id="2.8.1.6" evidence="1"/>
<dbReference type="EMBL" id="CP000964">
    <property type="protein sequence ID" value="ACI10666.1"/>
    <property type="molecule type" value="Genomic_DNA"/>
</dbReference>
<dbReference type="SMR" id="B5XZ75"/>
<dbReference type="KEGG" id="kpe:KPK_3773"/>
<dbReference type="HOGENOM" id="CLU_033172_1_2_6"/>
<dbReference type="UniPathway" id="UPA00078">
    <property type="reaction ID" value="UER00162"/>
</dbReference>
<dbReference type="Proteomes" id="UP000001734">
    <property type="component" value="Chromosome"/>
</dbReference>
<dbReference type="GO" id="GO:0051537">
    <property type="term" value="F:2 iron, 2 sulfur cluster binding"/>
    <property type="evidence" value="ECO:0007669"/>
    <property type="project" value="UniProtKB-KW"/>
</dbReference>
<dbReference type="GO" id="GO:0051539">
    <property type="term" value="F:4 iron, 4 sulfur cluster binding"/>
    <property type="evidence" value="ECO:0007669"/>
    <property type="project" value="UniProtKB-KW"/>
</dbReference>
<dbReference type="GO" id="GO:0004076">
    <property type="term" value="F:biotin synthase activity"/>
    <property type="evidence" value="ECO:0007669"/>
    <property type="project" value="UniProtKB-UniRule"/>
</dbReference>
<dbReference type="GO" id="GO:0005506">
    <property type="term" value="F:iron ion binding"/>
    <property type="evidence" value="ECO:0007669"/>
    <property type="project" value="UniProtKB-UniRule"/>
</dbReference>
<dbReference type="GO" id="GO:0009102">
    <property type="term" value="P:biotin biosynthetic process"/>
    <property type="evidence" value="ECO:0007669"/>
    <property type="project" value="UniProtKB-UniRule"/>
</dbReference>
<dbReference type="CDD" id="cd01335">
    <property type="entry name" value="Radical_SAM"/>
    <property type="match status" value="1"/>
</dbReference>
<dbReference type="FunFam" id="3.20.20.70:FF:000011">
    <property type="entry name" value="Biotin synthase"/>
    <property type="match status" value="1"/>
</dbReference>
<dbReference type="Gene3D" id="3.20.20.70">
    <property type="entry name" value="Aldolase class I"/>
    <property type="match status" value="1"/>
</dbReference>
<dbReference type="HAMAP" id="MF_01694">
    <property type="entry name" value="BioB"/>
    <property type="match status" value="1"/>
</dbReference>
<dbReference type="InterPro" id="IPR013785">
    <property type="entry name" value="Aldolase_TIM"/>
</dbReference>
<dbReference type="InterPro" id="IPR010722">
    <property type="entry name" value="BATS_dom"/>
</dbReference>
<dbReference type="InterPro" id="IPR002684">
    <property type="entry name" value="Biotin_synth/BioAB"/>
</dbReference>
<dbReference type="InterPro" id="IPR024177">
    <property type="entry name" value="Biotin_synthase"/>
</dbReference>
<dbReference type="InterPro" id="IPR006638">
    <property type="entry name" value="Elp3/MiaA/NifB-like_rSAM"/>
</dbReference>
<dbReference type="InterPro" id="IPR007197">
    <property type="entry name" value="rSAM"/>
</dbReference>
<dbReference type="NCBIfam" id="TIGR00433">
    <property type="entry name" value="bioB"/>
    <property type="match status" value="1"/>
</dbReference>
<dbReference type="PANTHER" id="PTHR22976">
    <property type="entry name" value="BIOTIN SYNTHASE"/>
    <property type="match status" value="1"/>
</dbReference>
<dbReference type="PANTHER" id="PTHR22976:SF2">
    <property type="entry name" value="BIOTIN SYNTHASE, MITOCHONDRIAL"/>
    <property type="match status" value="1"/>
</dbReference>
<dbReference type="Pfam" id="PF06968">
    <property type="entry name" value="BATS"/>
    <property type="match status" value="1"/>
</dbReference>
<dbReference type="Pfam" id="PF04055">
    <property type="entry name" value="Radical_SAM"/>
    <property type="match status" value="1"/>
</dbReference>
<dbReference type="PIRSF" id="PIRSF001619">
    <property type="entry name" value="Biotin_synth"/>
    <property type="match status" value="1"/>
</dbReference>
<dbReference type="SFLD" id="SFLDF00272">
    <property type="entry name" value="biotin_synthase"/>
    <property type="match status" value="1"/>
</dbReference>
<dbReference type="SFLD" id="SFLDS00029">
    <property type="entry name" value="Radical_SAM"/>
    <property type="match status" value="1"/>
</dbReference>
<dbReference type="SMART" id="SM00876">
    <property type="entry name" value="BATS"/>
    <property type="match status" value="1"/>
</dbReference>
<dbReference type="SMART" id="SM00729">
    <property type="entry name" value="Elp3"/>
    <property type="match status" value="1"/>
</dbReference>
<dbReference type="SUPFAM" id="SSF102114">
    <property type="entry name" value="Radical SAM enzymes"/>
    <property type="match status" value="1"/>
</dbReference>
<dbReference type="PROSITE" id="PS51918">
    <property type="entry name" value="RADICAL_SAM"/>
    <property type="match status" value="1"/>
</dbReference>
<gene>
    <name evidence="1" type="primary">bioB</name>
    <name type="ordered locus">KPK_3773</name>
</gene>
<name>BIOB_KLEP3</name>
<protein>
    <recommendedName>
        <fullName evidence="1">Biotin synthase</fullName>
        <ecNumber evidence="1">2.8.1.6</ecNumber>
    </recommendedName>
</protein>
<accession>B5XZ75</accession>